<accession>Q76RB8</accession>
<protein>
    <recommendedName>
        <fullName>Protein OPG137</fullName>
    </recommendedName>
</protein>
<feature type="chain" id="PRO_0000099230" description="Protein OPG137">
    <location>
        <begin position="1"/>
        <end position="318"/>
    </location>
</feature>
<feature type="coiled-coil region" evidence="2">
    <location>
        <begin position="145"/>
        <end position="172"/>
    </location>
</feature>
<name>PG137_VACCA</name>
<evidence type="ECO:0000250" key="1">
    <source>
        <dbReference type="UniProtKB" id="Q80HV8"/>
    </source>
</evidence>
<evidence type="ECO:0000255" key="2"/>
<evidence type="ECO:0000305" key="3"/>
<dbReference type="EMBL" id="U94848">
    <property type="protein sequence ID" value="AAB96521.1"/>
    <property type="molecule type" value="Genomic_DNA"/>
</dbReference>
<dbReference type="EMBL" id="AY603355">
    <property type="protein sequence ID" value="AAT10520.1"/>
    <property type="molecule type" value="Genomic_DNA"/>
</dbReference>
<dbReference type="SMR" id="Q76RB8"/>
<dbReference type="Proteomes" id="UP000159908">
    <property type="component" value="Segment"/>
</dbReference>
<dbReference type="Proteomes" id="UP000172909">
    <property type="component" value="Segment"/>
</dbReference>
<dbReference type="GO" id="GO:0030430">
    <property type="term" value="C:host cell cytoplasm"/>
    <property type="evidence" value="ECO:0007669"/>
    <property type="project" value="UniProtKB-SubCell"/>
</dbReference>
<dbReference type="InterPro" id="IPR007755">
    <property type="entry name" value="Poxvirus_A11"/>
</dbReference>
<dbReference type="Pfam" id="PF05061">
    <property type="entry name" value="Pox_A11"/>
    <property type="match status" value="1"/>
</dbReference>
<keyword id="KW-0175">Coiled coil</keyword>
<keyword id="KW-1035">Host cytoplasm</keyword>
<keyword id="KW-0426">Late protein</keyword>
<keyword id="KW-0597">Phosphoprotein</keyword>
<reference key="1">
    <citation type="journal article" date="1998" name="Virology">
        <title>The complete genomic sequence of the modified vaccinia Ankara strain: comparison with other orthopoxviruses.</title>
        <authorList>
            <person name="Antoine G."/>
            <person name="Scheiflinger F."/>
            <person name="Dorner F."/>
            <person name="Falkner F.G."/>
        </authorList>
    </citation>
    <scope>NUCLEOTIDE SEQUENCE [LARGE SCALE GENOMIC DNA]</scope>
</reference>
<reference key="2">
    <citation type="submission" date="2004-04" db="EMBL/GenBank/DDBJ databases">
        <authorList>
            <person name="Esposito J.J."/>
            <person name="Frace M."/>
            <person name="Sammons S.A."/>
            <person name="Olsen-Rasmussen M.S."/>
            <person name="Osborne J."/>
            <person name="Khristova M."/>
            <person name="Wohlhueter R.M."/>
        </authorList>
    </citation>
    <scope>NUCLEOTIDE SEQUENCE [LARGE SCALE GENOMIC DNA]</scope>
    <source>
        <strain>Isolate Acambis 3000</strain>
    </source>
</reference>
<comment type="function">
    <text evidence="1">Required for viral crescent formation early during virus morphogenesis.</text>
</comment>
<comment type="subunit">
    <text evidence="1">Homomultimer. Interacts with OPG160.</text>
</comment>
<comment type="subcellular location">
    <subcellularLocation>
        <location evidence="1">Host cytoplasm</location>
    </subcellularLocation>
    <text evidence="1">Localizes to the cytoplasmic viral factory. Not incorporated into virus particles. Does not seem to be a transmembrane protein.</text>
</comment>
<comment type="induction">
    <text>Expressed in the late phase of the viral replicative cycle.</text>
</comment>
<comment type="PTM">
    <text evidence="1">Phosphorylated by a OPG054-independent mechanism.</text>
</comment>
<comment type="similarity">
    <text evidence="3">Belongs to the orthopoxvirus OPG137 family.</text>
</comment>
<proteinExistence type="evidence at transcript level"/>
<organism>
    <name type="scientific">Vaccinia virus (strain Ankara)</name>
    <name type="common">VACV</name>
    <dbReference type="NCBI Taxonomy" id="126794"/>
    <lineage>
        <taxon>Viruses</taxon>
        <taxon>Varidnaviria</taxon>
        <taxon>Bamfordvirae</taxon>
        <taxon>Nucleocytoviricota</taxon>
        <taxon>Pokkesviricetes</taxon>
        <taxon>Chitovirales</taxon>
        <taxon>Poxviridae</taxon>
        <taxon>Chordopoxvirinae</taxon>
        <taxon>Orthopoxvirus</taxon>
        <taxon>Vaccinia virus</taxon>
    </lineage>
</organism>
<sequence length="318" mass="36135">MTTVPVTDIQNDLITEFSEDNYPSNKNYEITLRQMSILTHVNNVVDREHNAAVVSSPEEISSQLNEDLFPDDDSPATIIERVQPHTTIIDDTPPPTFRRELLISEQRQQREKRFNITVSKNAEAIMESRSMISSMPTQTPSLGVVYDKDKRIQMLEDEVVNLRNQRSNTKSSDNLDNFTRILFGKTPYKSTEVNKRIAIVNYANLNGSPLSVEDLDVCSEDEIDRIYKTIKQYHESRKRKIIVTNVIIIVINIIEQALLKLGFEEIKGLSTDITSEIIDVEIGDDCDAVASKLGIGNSPVLNIVLFILKIFVKRIKII</sequence>
<organismHost>
    <name type="scientific">Homo sapiens</name>
    <name type="common">Human</name>
    <dbReference type="NCBI Taxonomy" id="9606"/>
</organismHost>
<gene>
    <name type="primary">OPG137</name>
    <name type="ordered locus">MVA122R</name>
    <name type="ordered locus">ACAM3000_MVA_122</name>
    <name type="ORF">A11R</name>
</gene>